<organism>
    <name type="scientific">Streptococcus pyogenes serotype M18 (strain MGAS8232)</name>
    <dbReference type="NCBI Taxonomy" id="186103"/>
    <lineage>
        <taxon>Bacteria</taxon>
        <taxon>Bacillati</taxon>
        <taxon>Bacillota</taxon>
        <taxon>Bacilli</taxon>
        <taxon>Lactobacillales</taxon>
        <taxon>Streptococcaceae</taxon>
        <taxon>Streptococcus</taxon>
    </lineage>
</organism>
<dbReference type="EMBL" id="AE009949">
    <property type="protein sequence ID" value="AAL97522.1"/>
    <property type="molecule type" value="Genomic_DNA"/>
</dbReference>
<dbReference type="RefSeq" id="WP_002985149.1">
    <property type="nucleotide sequence ID" value="NC_003485.1"/>
</dbReference>
<dbReference type="SMR" id="P66116"/>
<dbReference type="GeneID" id="69901075"/>
<dbReference type="KEGG" id="spm:spyM18_0868"/>
<dbReference type="HOGENOM" id="CLU_123265_0_1_9"/>
<dbReference type="GO" id="GO:1990904">
    <property type="term" value="C:ribonucleoprotein complex"/>
    <property type="evidence" value="ECO:0007669"/>
    <property type="project" value="UniProtKB-KW"/>
</dbReference>
<dbReference type="GO" id="GO:0005840">
    <property type="term" value="C:ribosome"/>
    <property type="evidence" value="ECO:0007669"/>
    <property type="project" value="UniProtKB-KW"/>
</dbReference>
<dbReference type="GO" id="GO:0019843">
    <property type="term" value="F:rRNA binding"/>
    <property type="evidence" value="ECO:0007669"/>
    <property type="project" value="UniProtKB-UniRule"/>
</dbReference>
<dbReference type="GO" id="GO:0003735">
    <property type="term" value="F:structural constituent of ribosome"/>
    <property type="evidence" value="ECO:0007669"/>
    <property type="project" value="InterPro"/>
</dbReference>
<dbReference type="GO" id="GO:0000027">
    <property type="term" value="P:ribosomal large subunit assembly"/>
    <property type="evidence" value="ECO:0007669"/>
    <property type="project" value="UniProtKB-UniRule"/>
</dbReference>
<dbReference type="GO" id="GO:0006412">
    <property type="term" value="P:translation"/>
    <property type="evidence" value="ECO:0007669"/>
    <property type="project" value="InterPro"/>
</dbReference>
<dbReference type="CDD" id="cd07026">
    <property type="entry name" value="Ribosomal_L20"/>
    <property type="match status" value="1"/>
</dbReference>
<dbReference type="FunFam" id="1.10.1900.20:FF:000001">
    <property type="entry name" value="50S ribosomal protein L20"/>
    <property type="match status" value="1"/>
</dbReference>
<dbReference type="Gene3D" id="6.10.160.10">
    <property type="match status" value="1"/>
</dbReference>
<dbReference type="Gene3D" id="1.10.1900.20">
    <property type="entry name" value="Ribosomal protein L20"/>
    <property type="match status" value="1"/>
</dbReference>
<dbReference type="HAMAP" id="MF_00382">
    <property type="entry name" value="Ribosomal_bL20"/>
    <property type="match status" value="1"/>
</dbReference>
<dbReference type="InterPro" id="IPR005813">
    <property type="entry name" value="Ribosomal_bL20"/>
</dbReference>
<dbReference type="InterPro" id="IPR049946">
    <property type="entry name" value="RIBOSOMAL_L20_CS"/>
</dbReference>
<dbReference type="InterPro" id="IPR035566">
    <property type="entry name" value="Ribosomal_protein_bL20_C"/>
</dbReference>
<dbReference type="NCBIfam" id="TIGR01032">
    <property type="entry name" value="rplT_bact"/>
    <property type="match status" value="1"/>
</dbReference>
<dbReference type="PANTHER" id="PTHR10986">
    <property type="entry name" value="39S RIBOSOMAL PROTEIN L20"/>
    <property type="match status" value="1"/>
</dbReference>
<dbReference type="Pfam" id="PF00453">
    <property type="entry name" value="Ribosomal_L20"/>
    <property type="match status" value="1"/>
</dbReference>
<dbReference type="PRINTS" id="PR00062">
    <property type="entry name" value="RIBOSOMALL20"/>
</dbReference>
<dbReference type="SUPFAM" id="SSF74731">
    <property type="entry name" value="Ribosomal protein L20"/>
    <property type="match status" value="1"/>
</dbReference>
<dbReference type="PROSITE" id="PS00937">
    <property type="entry name" value="RIBOSOMAL_L20"/>
    <property type="match status" value="1"/>
</dbReference>
<reference key="1">
    <citation type="journal article" date="2002" name="Proc. Natl. Acad. Sci. U.S.A.">
        <title>Genome sequence and comparative microarray analysis of serotype M18 group A Streptococcus strains associated with acute rheumatic fever outbreaks.</title>
        <authorList>
            <person name="Smoot J.C."/>
            <person name="Barbian K.D."/>
            <person name="Van Gompel J.J."/>
            <person name="Smoot L.M."/>
            <person name="Chaussee M.S."/>
            <person name="Sylva G.L."/>
            <person name="Sturdevant D.E."/>
            <person name="Ricklefs S.M."/>
            <person name="Porcella S.F."/>
            <person name="Parkins L.D."/>
            <person name="Beres S.B."/>
            <person name="Campbell D.S."/>
            <person name="Smith T.M."/>
            <person name="Zhang Q."/>
            <person name="Kapur V."/>
            <person name="Daly J.A."/>
            <person name="Veasy L.G."/>
            <person name="Musser J.M."/>
        </authorList>
    </citation>
    <scope>NUCLEOTIDE SEQUENCE [LARGE SCALE GENOMIC DNA]</scope>
    <source>
        <strain>MGAS8232</strain>
    </source>
</reference>
<protein>
    <recommendedName>
        <fullName evidence="1">Large ribosomal subunit protein bL20</fullName>
    </recommendedName>
    <alternativeName>
        <fullName evidence="2">50S ribosomal protein L20</fullName>
    </alternativeName>
</protein>
<proteinExistence type="inferred from homology"/>
<accession>P66116</accession>
<accession>Q9A0E8</accession>
<keyword id="KW-0687">Ribonucleoprotein</keyword>
<keyword id="KW-0689">Ribosomal protein</keyword>
<keyword id="KW-0694">RNA-binding</keyword>
<keyword id="KW-0699">rRNA-binding</keyword>
<sequence length="119" mass="13622">MARVKGGVVSRKRRKRILKLAKGYYGAKHILFRTAKEQVMNSYYYAYRDRRQKKRDFRKLWITRINAAARMNGLSYSQLMHGLKLAEIEVNRKMLADLAVADAAAFTALADAAKAKLGK</sequence>
<evidence type="ECO:0000255" key="1">
    <source>
        <dbReference type="HAMAP-Rule" id="MF_00382"/>
    </source>
</evidence>
<evidence type="ECO:0000305" key="2"/>
<feature type="chain" id="PRO_0000177243" description="Large ribosomal subunit protein bL20">
    <location>
        <begin position="1"/>
        <end position="119"/>
    </location>
</feature>
<comment type="function">
    <text evidence="1">Binds directly to 23S ribosomal RNA and is necessary for the in vitro assembly process of the 50S ribosomal subunit. It is not involved in the protein synthesizing functions of that subunit.</text>
</comment>
<comment type="similarity">
    <text evidence="1">Belongs to the bacterial ribosomal protein bL20 family.</text>
</comment>
<name>RL20_STRP8</name>
<gene>
    <name evidence="1" type="primary">rplT</name>
    <name type="synonym">rl20</name>
    <name type="ordered locus">spyM18_0868</name>
</gene>